<accession>Q12612</accession>
<accession>Q9C1B6</accession>
<evidence type="ECO:0000250" key="1">
    <source>
        <dbReference type="UniProtKB" id="P04798"/>
    </source>
</evidence>
<evidence type="ECO:0000255" key="2"/>
<evidence type="ECO:0000255" key="3">
    <source>
        <dbReference type="PROSITE-ProRule" id="PRU00498"/>
    </source>
</evidence>
<evidence type="ECO:0000269" key="4">
    <source>
    </source>
</evidence>
<evidence type="ECO:0000269" key="5">
    <source>
    </source>
</evidence>
<evidence type="ECO:0000269" key="6">
    <source>
    </source>
</evidence>
<evidence type="ECO:0000269" key="7">
    <source>
    </source>
</evidence>
<evidence type="ECO:0000269" key="8">
    <source>
    </source>
</evidence>
<evidence type="ECO:0000269" key="9">
    <source>
    </source>
</evidence>
<evidence type="ECO:0000269" key="10">
    <source>
    </source>
</evidence>
<evidence type="ECO:0000269" key="11">
    <source>
    </source>
</evidence>
<evidence type="ECO:0000269" key="12">
    <source>
    </source>
</evidence>
<evidence type="ECO:0000269" key="13">
    <source>
    </source>
</evidence>
<evidence type="ECO:0000269" key="14">
    <source>
    </source>
</evidence>
<evidence type="ECO:0000269" key="15">
    <source>
    </source>
</evidence>
<evidence type="ECO:0000269" key="16">
    <source>
    </source>
</evidence>
<evidence type="ECO:0000303" key="17">
    <source>
    </source>
</evidence>
<evidence type="ECO:0000305" key="18"/>
<gene>
    <name evidence="17" type="primary">TRI4</name>
</gene>
<sequence>MVDQDWIKALVNIPISHAVGVVAASTVIYFLSSCFYNLYLHPLRKIPGPKLAAIGPYLEFYHEVIRDGQYLWEIAKMHDKYGPIVRVNDKEVHIRDPSYYSTIYTAGARKTNKDPATVGAFDVPTATAATVDHDHHRARRGYLNPYFSKRSITNLEPFIHERVTKLLSRFQEHLDNDQVLSLDGAFCALTADVITSRFYGKHYNYLDLPDFHFVVRDGFLGLTKVYHLARFIPVLVTVLKRLPYSCLRLIAPSVSDLLQMRNEIHERGGDEFLSSKTSEAKSSILFGALADTHIPPVERTVERMLDEGTVILFAGTETTSRTLAITFFYLLTHPECLRKLREELNSLPKVEGDRFPLATLENLPYLNGVVHEGFRLAFGPISRSGRVATQENLKYKEHVIPAGTPVSQSTYFMHTDPKIFPEPEKFKPERWIEAAEKKIPLKKYITNFSQGSRQCIGYTMAFAEMYLAMSRIARAYDVELYDTTKADIDMTHARIVAYPKAIPGKTEHVGEIRVKVLKAL</sequence>
<reference key="1">
    <citation type="journal article" date="1995" name="Mol. Gen. Genet.">
        <title>The Tri4 gene of Fusarium sporotrichioides encodes a cytochrome P450 monooxygenase involved in trichothecene biosynthesis.</title>
        <authorList>
            <person name="Hohn T.M."/>
            <person name="Desjardins A.E."/>
            <person name="McCormick S.P."/>
        </authorList>
    </citation>
    <scope>NUCLEOTIDE SEQUENCE [GENOMIC DNA]</scope>
    <scope>FUNCTION</scope>
    <scope>DISRUPTION PHENOTYPE</scope>
    <scope>PATHWAY</scope>
    <source>
        <strain>ATCC 24631 / NRRL 3299</strain>
    </source>
</reference>
<reference key="2">
    <citation type="journal article" date="2001" name="Fungal Genet. Biol.">
        <title>A genetic and biochemical approach to study trichothecene diversity in Fusarium sporotrichioides and Fusarium graminearum.</title>
        <authorList>
            <person name="Brown D.W."/>
            <person name="McCormick S.P."/>
            <person name="Alexander N.J."/>
            <person name="Proctor R.H."/>
            <person name="Desjardins A.E."/>
        </authorList>
    </citation>
    <scope>NUCLEOTIDE SEQUENCE [GENOMIC DNA]</scope>
    <scope>FUNCTION</scope>
    <source>
        <strain>ATCC 24631 / NRRL 3299</strain>
    </source>
</reference>
<reference key="3">
    <citation type="journal article" date="1986" name="Arch. Biochem. Biophys.">
        <title>Purification and characterization of the sesquiterpene cyclase trichodiene synthetase from Fusarium sporotrichioides.</title>
        <authorList>
            <person name="Hohn T.M."/>
            <person name="Vanmiddlesworth F."/>
        </authorList>
    </citation>
    <scope>FUNCTION</scope>
</reference>
<reference key="4">
    <citation type="journal article" date="1990" name="Appl. Environ. Microbiol.">
        <title>Bioconversion of possible T-2 toxin precursors by a mutant strain of Fusarium sporotrichioides NRRL 3299.</title>
        <authorList>
            <person name="McCormick S.P."/>
            <person name="Taylor S.L."/>
            <person name="Plattner R.D."/>
            <person name="Beremand M.N."/>
        </authorList>
    </citation>
    <scope>FUNCTION</scope>
</reference>
<reference key="5">
    <citation type="journal article" date="1996" name="Appl. Environ. Microbiol.">
        <title>Isolation and characterization of Tri3, a gene encoding 15-O-acetyltransferase from Fusarium sporotrichioides.</title>
        <authorList>
            <person name="McCormick S.P."/>
            <person name="Hohn T.M."/>
            <person name="Desjardins A.E."/>
        </authorList>
    </citation>
    <scope>FUNCTION</scope>
</reference>
<reference key="6">
    <citation type="journal article" date="1998" name="Appl. Environ. Microbiol.">
        <title>The TRI11 gene of Fusarium sporotrichioides encodes a cytochrome P-450 monooxygenase required for C-15 hydroxylation in trichothecene biosynthesis.</title>
        <authorList>
            <person name="Alexander N.J."/>
            <person name="Hohn T.M."/>
            <person name="McCormick S.P."/>
        </authorList>
    </citation>
    <scope>FUNCTION</scope>
</reference>
<reference key="7">
    <citation type="journal article" date="1999" name="Appl. Environ. Microbiol.">
        <title>Disruption of TRI101, the gene encoding trichothecene 3-O-acetyltransferase, from Fusarium sporotrichioides.</title>
        <authorList>
            <person name="McCormick S.P."/>
            <person name="Alexander N.J."/>
            <person name="Trapp S.E."/>
            <person name="Hohn T.M."/>
        </authorList>
    </citation>
    <scope>FUNCTION</scope>
</reference>
<reference key="8">
    <citation type="journal article" date="2002" name="Appl. Environ. Microbiol.">
        <title>Fusarium Tri8 encodes a trichothecene C-3 esterase.</title>
        <authorList>
            <person name="McCormick S.P."/>
            <person name="Alexander N.J."/>
        </authorList>
    </citation>
    <scope>FUNCTION</scope>
</reference>
<reference key="9">
    <citation type="journal article" date="2002" name="Fungal Genet. Biol.">
        <title>Inactivation of a cytochrome P-450 is a determinant of trichothecene diversity in Fusarium species.</title>
        <authorList>
            <person name="Brown D.W."/>
            <person name="McCormick S.P."/>
            <person name="Alexander N.J."/>
            <person name="Proctor R.H."/>
            <person name="Desjardins A.E."/>
        </authorList>
    </citation>
    <scope>FUNCTION</scope>
</reference>
<reference key="10">
    <citation type="journal article" date="2003" name="Appl. Environ. Microbiol.">
        <title>Tri1 encodes the cytochrome P450 monooxygenase for C-8 hydroxylation during trichothecene biosynthesis in Fusarium sporotrichioides and resides upstream of another new Tri gene.</title>
        <authorList>
            <person name="Meek I.B."/>
            <person name="Peplow A.W."/>
            <person name="Ake C. Jr."/>
            <person name="Phillips T.D."/>
            <person name="Beremand M.N."/>
        </authorList>
    </citation>
    <scope>FUNCTION</scope>
</reference>
<reference key="11">
    <citation type="journal article" date="2003" name="Appl. Environ. Microbiol.">
        <title>Identification of new genes positively regulated by Tri10 and a regulatory network for trichothecene mycotoxin production.</title>
        <authorList>
            <person name="Peplow A.W."/>
            <person name="Tag A.G."/>
            <person name="Garifullina G.F."/>
            <person name="Beremand M.N."/>
        </authorList>
    </citation>
    <scope>INDUCTION</scope>
</reference>
<reference key="12">
    <citation type="journal article" date="2003" name="Appl. Environ. Microbiol.">
        <title>Tri16 is required for esterification of position C-8 during trichothecene mycotoxin production by Fusarium sporotrichioides.</title>
        <authorList>
            <person name="Peplow A.W."/>
            <person name="Meek I.B."/>
            <person name="Wiles M.C."/>
            <person name="Phillips T.D."/>
            <person name="Beremand M.N."/>
        </authorList>
    </citation>
    <scope>FUNCTION</scope>
</reference>
<reference key="13">
    <citation type="journal article" date="2006" name="Can. J. Microbiol.">
        <title>Fusarium Tri4 encodes a multifunctional oxygenase required for trichothecene biosynthesis.</title>
        <authorList>
            <person name="McCormick S.P."/>
            <person name="Alexander N.J."/>
            <person name="Proctor R.H."/>
        </authorList>
    </citation>
    <scope>FUNCTION</scope>
    <scope>CATALYTIC ACTIVITY</scope>
</reference>
<reference key="14">
    <citation type="journal article" date="2009" name="Protein Sci.">
        <title>Structural and functional characterization of TRI3 trichothecene 15-O-acetyltransferase from Fusarium sporotrichioides.</title>
        <authorList>
            <person name="Garvey G.S."/>
            <person name="McCormick S.P."/>
            <person name="Alexander N.J."/>
            <person name="Rayment I."/>
        </authorList>
    </citation>
    <scope>FUNCTION</scope>
</reference>
<dbReference type="EC" id="1.-.-.-" evidence="11"/>
<dbReference type="EMBL" id="U22462">
    <property type="protein sequence ID" value="AAB72032.1"/>
    <property type="molecule type" value="Genomic_DNA"/>
</dbReference>
<dbReference type="EMBL" id="AF359360">
    <property type="protein sequence ID" value="AAK33073.1"/>
    <property type="molecule type" value="Genomic_DNA"/>
</dbReference>
<dbReference type="SMR" id="Q12612"/>
<dbReference type="GlyCosmos" id="Q12612">
    <property type="glycosylation" value="1 site, No reported glycans"/>
</dbReference>
<dbReference type="BioCyc" id="MetaCyc:MONOMER-19573"/>
<dbReference type="UniPathway" id="UPA00267"/>
<dbReference type="GO" id="GO:0016020">
    <property type="term" value="C:membrane"/>
    <property type="evidence" value="ECO:0007669"/>
    <property type="project" value="UniProtKB-SubCell"/>
</dbReference>
<dbReference type="GO" id="GO:0020037">
    <property type="term" value="F:heme binding"/>
    <property type="evidence" value="ECO:0007669"/>
    <property type="project" value="InterPro"/>
</dbReference>
<dbReference type="GO" id="GO:0005506">
    <property type="term" value="F:iron ion binding"/>
    <property type="evidence" value="ECO:0007669"/>
    <property type="project" value="InterPro"/>
</dbReference>
<dbReference type="GO" id="GO:0004497">
    <property type="term" value="F:monooxygenase activity"/>
    <property type="evidence" value="ECO:0007669"/>
    <property type="project" value="UniProtKB-KW"/>
</dbReference>
<dbReference type="GO" id="GO:0016705">
    <property type="term" value="F:oxidoreductase activity, acting on paired donors, with incorporation or reduction of molecular oxygen"/>
    <property type="evidence" value="ECO:0007669"/>
    <property type="project" value="InterPro"/>
</dbReference>
<dbReference type="CDD" id="cd11062">
    <property type="entry name" value="CYP58-like"/>
    <property type="match status" value="1"/>
</dbReference>
<dbReference type="Gene3D" id="1.10.630.10">
    <property type="entry name" value="Cytochrome P450"/>
    <property type="match status" value="1"/>
</dbReference>
<dbReference type="InterPro" id="IPR001128">
    <property type="entry name" value="Cyt_P450"/>
</dbReference>
<dbReference type="InterPro" id="IPR017972">
    <property type="entry name" value="Cyt_P450_CS"/>
</dbReference>
<dbReference type="InterPro" id="IPR002401">
    <property type="entry name" value="Cyt_P450_E_grp-I"/>
</dbReference>
<dbReference type="InterPro" id="IPR036396">
    <property type="entry name" value="Cyt_P450_sf"/>
</dbReference>
<dbReference type="InterPro" id="IPR050121">
    <property type="entry name" value="Cytochrome_P450_monoxygenase"/>
</dbReference>
<dbReference type="PANTHER" id="PTHR24305">
    <property type="entry name" value="CYTOCHROME P450"/>
    <property type="match status" value="1"/>
</dbReference>
<dbReference type="PANTHER" id="PTHR24305:SF157">
    <property type="entry name" value="N-ACETYLTRYPTOPHAN 6-HYDROXYLASE IVOC-RELATED"/>
    <property type="match status" value="1"/>
</dbReference>
<dbReference type="Pfam" id="PF00067">
    <property type="entry name" value="p450"/>
    <property type="match status" value="1"/>
</dbReference>
<dbReference type="PRINTS" id="PR00463">
    <property type="entry name" value="EP450I"/>
</dbReference>
<dbReference type="PRINTS" id="PR00385">
    <property type="entry name" value="P450"/>
</dbReference>
<dbReference type="SUPFAM" id="SSF48264">
    <property type="entry name" value="Cytochrome P450"/>
    <property type="match status" value="1"/>
</dbReference>
<dbReference type="PROSITE" id="PS00086">
    <property type="entry name" value="CYTOCHROME_P450"/>
    <property type="match status" value="1"/>
</dbReference>
<keyword id="KW-0325">Glycoprotein</keyword>
<keyword id="KW-0349">Heme</keyword>
<keyword id="KW-0408">Iron</keyword>
<keyword id="KW-0472">Membrane</keyword>
<keyword id="KW-0479">Metal-binding</keyword>
<keyword id="KW-0503">Monooxygenase</keyword>
<keyword id="KW-0560">Oxidoreductase</keyword>
<keyword id="KW-0812">Transmembrane</keyword>
<keyword id="KW-1133">Transmembrane helix</keyword>
<protein>
    <recommendedName>
        <fullName evidence="17">Cytochrome P450 monooxygenase TRI4</fullName>
        <ecNumber evidence="11">1.-.-.-</ecNumber>
    </recommendedName>
    <alternativeName>
        <fullName evidence="17">Core trichothecene cluster (CTC) protein 4</fullName>
    </alternativeName>
</protein>
<comment type="function">
    <text evidence="4 5 6 7 8 10 11 12 13 14 15 16">Cytochrome P450 monooxygenase; part of the core gene cluster that mediates the biosynthesis of trichothecenes, a very large family of chemically related bicyclic sesquiterpene compounds acting as mycotoxins, including T2-toxin (PubMed:11352533, PubMed:16917519). The biosynthesis of trichothecenes begins with the cyclization of farnesyl diphosphate to trichodiene and is catalyzed by the trichodiene synthase TRI5 (PubMed:3800398). Trichodiene undergoes a series of oxygenations catalyzed by the cytochrome P450 monooxygenase TRI4 (PubMed:7651333). TRI4 controls the addition of four oxygens at C-2, C-3, C-11, and the C-12, C-13-epoxide to form the intermediate isotrichotriol (PubMed:16917519). Isotrichotriol then undergoes a non-enzymatic isomerization and cyclization to form isotrichodermol (PubMed:2317042). During this process, the oxygen at the C-2 position becomes the pyran ring oxygen and the hydroxyl group at C-11 is lost (PubMed:2317042). More complex type A trichothecenes are built by modifying isotrichodermol through a series of paired hydroxylation and acetylation or acylation steps (PubMed:11352533). Isotrichodermol is converted to isotrichodermin by the acetyltransferase TRI101 (PubMed:10583973). TRI101 encodes a C-3 transacetylase that acts as a self-protection or resistance factor during biosynthesis and that the presence of a free C-3 hydroxyl group is a key component of Fusarium trichothecene phytotoxicity (PubMed:10583973). A second hydroxyl group is added to C-15 by the trichothecene C-15 hydroxylase TRI11, producing 15-decalonectrin, which is then acetylated by TRI3, producing calonectrin (PubMed:8593041, PubMed:9435078). A third hydroxyl group is added at C-4 by the cytochrome P450 monooxygenase TRI13, converting calonectrin to 3,15-diacetoxyspirpenol, which is subsequently acetylated by the acetyltransferase TRI7 (PubMed:11352533, PubMed:12135578). A fourth hydroxyl group is added to C-8 by the cytochrome P450 monooxygenase TRI1, followed by the addition of an isovaleryl moiety by TRI16 (PubMed:12620849, PubMed:14532047). Finally, the acetyl group is removed from the C-3 position by the trichothecene C-3 esterase TRI8 to produce T-2 toxin (PubMed:12039755).</text>
</comment>
<comment type="cofactor">
    <cofactor evidence="1">
        <name>heme</name>
        <dbReference type="ChEBI" id="CHEBI:30413"/>
    </cofactor>
</comment>
<comment type="pathway">
    <text evidence="14">Sesquiterpene biosynthesis; trichothecene biosynthesis.</text>
</comment>
<comment type="subcellular location">
    <subcellularLocation>
        <location evidence="2">Membrane</location>
        <topology evidence="2">Single-pass membrane protein</topology>
    </subcellularLocation>
</comment>
<comment type="induction">
    <text evidence="9">Expression is positively regulated by the trichothecene cluster-specific transcription activator TRI10 (PubMed:12732543).</text>
</comment>
<comment type="disruption phenotype">
    <text evidence="14">Results in the loss of production of both trichothecenes and apotrichodiol and the accumulation of the unoxygenated pathway intermediate trichodiene (PubMed:7651333).</text>
</comment>
<comment type="miscellaneous">
    <text evidence="18">Trichothecenes are sesquiterpenoid toxins that act by inhibiting protein biosynthesis.</text>
</comment>
<comment type="similarity">
    <text evidence="18">Belongs to the cytochrome P450 family.</text>
</comment>
<organism>
    <name type="scientific">Fusarium sporotrichioides</name>
    <dbReference type="NCBI Taxonomy" id="5514"/>
    <lineage>
        <taxon>Eukaryota</taxon>
        <taxon>Fungi</taxon>
        <taxon>Dikarya</taxon>
        <taxon>Ascomycota</taxon>
        <taxon>Pezizomycotina</taxon>
        <taxon>Sordariomycetes</taxon>
        <taxon>Hypocreomycetidae</taxon>
        <taxon>Hypocreales</taxon>
        <taxon>Nectriaceae</taxon>
        <taxon>Fusarium</taxon>
    </lineage>
</organism>
<name>TRI4_FUSSP</name>
<proteinExistence type="evidence at protein level"/>
<feature type="chain" id="PRO_0000442366" description="Cytochrome P450 monooxygenase TRI4">
    <location>
        <begin position="1"/>
        <end position="520"/>
    </location>
</feature>
<feature type="transmembrane region" description="Helical" evidence="2">
    <location>
        <begin position="10"/>
        <end position="30"/>
    </location>
</feature>
<feature type="binding site" description="axial binding residue" evidence="1">
    <location>
        <position position="455"/>
    </location>
    <ligand>
        <name>heme</name>
        <dbReference type="ChEBI" id="CHEBI:30413"/>
    </ligand>
    <ligandPart>
        <name>Fe</name>
        <dbReference type="ChEBI" id="CHEBI:18248"/>
    </ligandPart>
</feature>
<feature type="glycosylation site" description="N-linked (GlcNAc...) asparagine" evidence="3">
    <location>
        <position position="447"/>
    </location>
</feature>
<feature type="sequence conflict" description="In Ref. 1; AAB72032." ref="1">
    <original>F</original>
    <variation>C</variation>
    <location>
        <position position="378"/>
    </location>
</feature>